<keyword id="KW-0472">Membrane</keyword>
<keyword id="KW-1185">Reference proteome</keyword>
<keyword id="KW-0762">Sugar transport</keyword>
<keyword id="KW-0812">Transmembrane</keyword>
<keyword id="KW-1133">Transmembrane helix</keyword>
<keyword id="KW-0813">Transport</keyword>
<proteinExistence type="evidence at protein level"/>
<gene>
    <name type="ordered locus">At3g17430</name>
    <name type="ORF">MTO12.2</name>
</gene>
<dbReference type="EMBL" id="AB028620">
    <property type="protein sequence ID" value="BAB02919.1"/>
    <property type="molecule type" value="Genomic_DNA"/>
</dbReference>
<dbReference type="EMBL" id="CP002686">
    <property type="protein sequence ID" value="AEE75952.1"/>
    <property type="molecule type" value="Genomic_DNA"/>
</dbReference>
<dbReference type="EMBL" id="CP002686">
    <property type="protein sequence ID" value="ANM64871.1"/>
    <property type="molecule type" value="Genomic_DNA"/>
</dbReference>
<dbReference type="EMBL" id="AY059853">
    <property type="protein sequence ID" value="AAL24335.1"/>
    <property type="molecule type" value="mRNA"/>
</dbReference>
<dbReference type="EMBL" id="AY093299">
    <property type="protein sequence ID" value="AAM13298.1"/>
    <property type="molecule type" value="mRNA"/>
</dbReference>
<dbReference type="RefSeq" id="NP_001326874.1">
    <property type="nucleotide sequence ID" value="NM_001338289.1"/>
</dbReference>
<dbReference type="RefSeq" id="NP_566577.1">
    <property type="nucleotide sequence ID" value="NM_112622.4"/>
</dbReference>
<dbReference type="SMR" id="Q9LRP2"/>
<dbReference type="FunCoup" id="Q9LRP2">
    <property type="interactions" value="1576"/>
</dbReference>
<dbReference type="STRING" id="3702.Q9LRP2"/>
<dbReference type="iPTMnet" id="Q9LRP2"/>
<dbReference type="SwissPalm" id="Q9LRP2"/>
<dbReference type="PaxDb" id="3702-AT3G17430.1"/>
<dbReference type="ProteomicsDB" id="248674"/>
<dbReference type="EnsemblPlants" id="AT3G17430.1">
    <property type="protein sequence ID" value="AT3G17430.1"/>
    <property type="gene ID" value="AT3G17430"/>
</dbReference>
<dbReference type="EnsemblPlants" id="AT3G17430.2">
    <property type="protein sequence ID" value="AT3G17430.2"/>
    <property type="gene ID" value="AT3G17430"/>
</dbReference>
<dbReference type="GeneID" id="821007"/>
<dbReference type="Gramene" id="AT3G17430.1">
    <property type="protein sequence ID" value="AT3G17430.1"/>
    <property type="gene ID" value="AT3G17430"/>
</dbReference>
<dbReference type="Gramene" id="AT3G17430.2">
    <property type="protein sequence ID" value="AT3G17430.2"/>
    <property type="gene ID" value="AT3G17430"/>
</dbReference>
<dbReference type="KEGG" id="ath:AT3G17430"/>
<dbReference type="Araport" id="AT3G17430"/>
<dbReference type="TAIR" id="AT3G17430"/>
<dbReference type="eggNOG" id="KOG1441">
    <property type="taxonomic scope" value="Eukaryota"/>
</dbReference>
<dbReference type="HOGENOM" id="CLU_022332_3_2_1"/>
<dbReference type="InParanoid" id="Q9LRP2"/>
<dbReference type="OMA" id="LGAEKCQ"/>
<dbReference type="OrthoDB" id="6418713at2759"/>
<dbReference type="PhylomeDB" id="Q9LRP2"/>
<dbReference type="PRO" id="PR:Q9LRP2"/>
<dbReference type="Proteomes" id="UP000006548">
    <property type="component" value="Chromosome 3"/>
</dbReference>
<dbReference type="ExpressionAtlas" id="Q9LRP2">
    <property type="expression patterns" value="baseline and differential"/>
</dbReference>
<dbReference type="GO" id="GO:0005794">
    <property type="term" value="C:Golgi apparatus"/>
    <property type="evidence" value="ECO:0007005"/>
    <property type="project" value="TAIR"/>
</dbReference>
<dbReference type="GO" id="GO:0016020">
    <property type="term" value="C:membrane"/>
    <property type="evidence" value="ECO:0007669"/>
    <property type="project" value="UniProtKB-SubCell"/>
</dbReference>
<dbReference type="InterPro" id="IPR004853">
    <property type="entry name" value="Sugar_P_trans_dom"/>
</dbReference>
<dbReference type="InterPro" id="IPR050186">
    <property type="entry name" value="TPT_transporter"/>
</dbReference>
<dbReference type="PANTHER" id="PTHR11132">
    <property type="entry name" value="SOLUTE CARRIER FAMILY 35"/>
    <property type="match status" value="1"/>
</dbReference>
<dbReference type="Pfam" id="PF03151">
    <property type="entry name" value="TPT"/>
    <property type="match status" value="1"/>
</dbReference>
<protein>
    <recommendedName>
        <fullName>Probable sugar phosphate/phosphate translocator At3g17430</fullName>
    </recommendedName>
</protein>
<feature type="chain" id="PRO_0000406113" description="Probable sugar phosphate/phosphate translocator At3g17430">
    <location>
        <begin position="1"/>
        <end position="375"/>
    </location>
</feature>
<feature type="transmembrane region" description="Helical" evidence="1">
    <location>
        <begin position="9"/>
        <end position="29"/>
    </location>
</feature>
<feature type="transmembrane region" description="Helical" evidence="1">
    <location>
        <begin position="43"/>
        <end position="63"/>
    </location>
</feature>
<feature type="transmembrane region" description="Helical" evidence="1">
    <location>
        <begin position="76"/>
        <end position="96"/>
    </location>
</feature>
<feature type="transmembrane region" description="Helical" evidence="1">
    <location>
        <begin position="106"/>
        <end position="126"/>
    </location>
</feature>
<feature type="transmembrane region" description="Helical" evidence="1">
    <location>
        <begin position="140"/>
        <end position="160"/>
    </location>
</feature>
<feature type="transmembrane region" description="Helical" evidence="1">
    <location>
        <begin position="163"/>
        <end position="183"/>
    </location>
</feature>
<feature type="transmembrane region" description="Helical" evidence="1">
    <location>
        <begin position="193"/>
        <end position="213"/>
    </location>
</feature>
<feature type="transmembrane region" description="Helical" evidence="1">
    <location>
        <begin position="229"/>
        <end position="249"/>
    </location>
</feature>
<feature type="transmembrane region" description="Helical" evidence="1">
    <location>
        <begin position="257"/>
        <end position="276"/>
    </location>
</feature>
<feature type="transmembrane region" description="Helical" evidence="1">
    <location>
        <begin position="280"/>
        <end position="302"/>
    </location>
</feature>
<feature type="region of interest" description="Disordered" evidence="2">
    <location>
        <begin position="328"/>
        <end position="348"/>
    </location>
</feature>
<organism>
    <name type="scientific">Arabidopsis thaliana</name>
    <name type="common">Mouse-ear cress</name>
    <dbReference type="NCBI Taxonomy" id="3702"/>
    <lineage>
        <taxon>Eukaryota</taxon>
        <taxon>Viridiplantae</taxon>
        <taxon>Streptophyta</taxon>
        <taxon>Embryophyta</taxon>
        <taxon>Tracheophyta</taxon>
        <taxon>Spermatophyta</taxon>
        <taxon>Magnoliopsida</taxon>
        <taxon>eudicotyledons</taxon>
        <taxon>Gunneridae</taxon>
        <taxon>Pentapetalae</taxon>
        <taxon>rosids</taxon>
        <taxon>malvids</taxon>
        <taxon>Brassicales</taxon>
        <taxon>Brassicaceae</taxon>
        <taxon>Camelineae</taxon>
        <taxon>Arabidopsis</taxon>
    </lineage>
</organism>
<name>PT317_ARATH</name>
<sequence>MAKMINKTLVLTYIYLLIYIILSSGVILYNKWVLSPKYFNFPLPITLTMIHMGFAGFVAFLLIRVFKVVAPVKMTFEIYATCVVPISAFFASSLWFGNTAYLHISVAFIQMLKALMPVATFIMAVVCGTDKPRCDVFSNMLLVSVGVVISSYGEIHFNIVGTVYQVTGIFAEALRLVLTQVLLQKKGLTLNPITSLYYIAPCSFVFLALPWYVLEKPTMEVSQIQFNFWIFFSNALCALALNFSIFLVIGRTGAVTIRVAGVLKDWILIALSTVIFPESTITGLNITGYAIALCGVVMYNYIKVRDVKASQPTADSLPDRINKEYKMEKKSSDKFNPNDSVEIPRVGGEVNDEEAPLITSRLSHIGRTQLGNHAA</sequence>
<evidence type="ECO:0000255" key="1"/>
<evidence type="ECO:0000256" key="2">
    <source>
        <dbReference type="SAM" id="MobiDB-lite"/>
    </source>
</evidence>
<evidence type="ECO:0000305" key="3"/>
<comment type="subcellular location">
    <subcellularLocation>
        <location evidence="3">Membrane</location>
        <topology evidence="3">Multi-pass membrane protein</topology>
    </subcellularLocation>
</comment>
<comment type="similarity">
    <text evidence="3">Belongs to the TPT transporter family. TPT (TC 2.A.7.9) subfamily.</text>
</comment>
<reference key="1">
    <citation type="journal article" date="2000" name="DNA Res.">
        <title>Structural analysis of Arabidopsis thaliana chromosome 3. I. Sequence features of the regions of 4,504,864 bp covered by sixty P1 and TAC clones.</title>
        <authorList>
            <person name="Sato S."/>
            <person name="Nakamura Y."/>
            <person name="Kaneko T."/>
            <person name="Katoh T."/>
            <person name="Asamizu E."/>
            <person name="Tabata S."/>
        </authorList>
    </citation>
    <scope>NUCLEOTIDE SEQUENCE [LARGE SCALE GENOMIC DNA]</scope>
    <source>
        <strain>cv. Columbia</strain>
    </source>
</reference>
<reference key="2">
    <citation type="journal article" date="2017" name="Plant J.">
        <title>Araport11: a complete reannotation of the Arabidopsis thaliana reference genome.</title>
        <authorList>
            <person name="Cheng C.Y."/>
            <person name="Krishnakumar V."/>
            <person name="Chan A.P."/>
            <person name="Thibaud-Nissen F."/>
            <person name="Schobel S."/>
            <person name="Town C.D."/>
        </authorList>
    </citation>
    <scope>GENOME REANNOTATION</scope>
    <source>
        <strain>cv. Columbia</strain>
    </source>
</reference>
<reference key="3">
    <citation type="journal article" date="2003" name="Science">
        <title>Empirical analysis of transcriptional activity in the Arabidopsis genome.</title>
        <authorList>
            <person name="Yamada K."/>
            <person name="Lim J."/>
            <person name="Dale J.M."/>
            <person name="Chen H."/>
            <person name="Shinn P."/>
            <person name="Palm C.J."/>
            <person name="Southwick A.M."/>
            <person name="Wu H.C."/>
            <person name="Kim C.J."/>
            <person name="Nguyen M."/>
            <person name="Pham P.K."/>
            <person name="Cheuk R.F."/>
            <person name="Karlin-Newmann G."/>
            <person name="Liu S.X."/>
            <person name="Lam B."/>
            <person name="Sakano H."/>
            <person name="Wu T."/>
            <person name="Yu G."/>
            <person name="Miranda M."/>
            <person name="Quach H.L."/>
            <person name="Tripp M."/>
            <person name="Chang C.H."/>
            <person name="Lee J.M."/>
            <person name="Toriumi M.J."/>
            <person name="Chan M.M."/>
            <person name="Tang C.C."/>
            <person name="Onodera C.S."/>
            <person name="Deng J.M."/>
            <person name="Akiyama K."/>
            <person name="Ansari Y."/>
            <person name="Arakawa T."/>
            <person name="Banh J."/>
            <person name="Banno F."/>
            <person name="Bowser L."/>
            <person name="Brooks S.Y."/>
            <person name="Carninci P."/>
            <person name="Chao Q."/>
            <person name="Choy N."/>
            <person name="Enju A."/>
            <person name="Goldsmith A.D."/>
            <person name="Gurjal M."/>
            <person name="Hansen N.F."/>
            <person name="Hayashizaki Y."/>
            <person name="Johnson-Hopson C."/>
            <person name="Hsuan V.W."/>
            <person name="Iida K."/>
            <person name="Karnes M."/>
            <person name="Khan S."/>
            <person name="Koesema E."/>
            <person name="Ishida J."/>
            <person name="Jiang P.X."/>
            <person name="Jones T."/>
            <person name="Kawai J."/>
            <person name="Kamiya A."/>
            <person name="Meyers C."/>
            <person name="Nakajima M."/>
            <person name="Narusaka M."/>
            <person name="Seki M."/>
            <person name="Sakurai T."/>
            <person name="Satou M."/>
            <person name="Tamse R."/>
            <person name="Vaysberg M."/>
            <person name="Wallender E.K."/>
            <person name="Wong C."/>
            <person name="Yamamura Y."/>
            <person name="Yuan S."/>
            <person name="Shinozaki K."/>
            <person name="Davis R.W."/>
            <person name="Theologis A."/>
            <person name="Ecker J.R."/>
        </authorList>
    </citation>
    <scope>NUCLEOTIDE SEQUENCE [LARGE SCALE MRNA]</scope>
    <source>
        <strain>cv. Columbia</strain>
    </source>
</reference>
<reference key="4">
    <citation type="journal article" date="2009" name="Plant Physiol.">
        <title>Large-scale Arabidopsis phosphoproteome profiling reveals novel chloroplast kinase substrates and phosphorylation networks.</title>
        <authorList>
            <person name="Reiland S."/>
            <person name="Messerli G."/>
            <person name="Baerenfaller K."/>
            <person name="Gerrits B."/>
            <person name="Endler A."/>
            <person name="Grossmann J."/>
            <person name="Gruissem W."/>
            <person name="Baginsky S."/>
        </authorList>
    </citation>
    <scope>IDENTIFICATION BY MASS SPECTROMETRY [LARGE SCALE ANALYSIS]</scope>
</reference>
<reference key="5">
    <citation type="journal article" date="2014" name="Proc. Natl. Acad. Sci. U.S.A.">
        <title>The Golgi localized bifunctional UDP-rhamnose/UDP-galactose transporter family of Arabidopsis.</title>
        <authorList>
            <person name="Rautengarten C."/>
            <person name="Ebert B."/>
            <person name="Moreno I."/>
            <person name="Temple H."/>
            <person name="Herter T."/>
            <person name="Link B."/>
            <person name="Donas-Cofre D."/>
            <person name="Moreno A."/>
            <person name="Saez-Aguayo S."/>
            <person name="Blanco F."/>
            <person name="Mortimer J.C."/>
            <person name="Schultink A."/>
            <person name="Reiter W.D."/>
            <person name="Dupree P."/>
            <person name="Pauly M."/>
            <person name="Heazlewood J.L."/>
            <person name="Scheller H.V."/>
            <person name="Orellana A."/>
        </authorList>
    </citation>
    <scope>GENE FAMILY</scope>
</reference>
<accession>Q9LRP2</accession>